<organism>
    <name type="scientific">Anaeromyxobacter sp. (strain Fw109-5)</name>
    <dbReference type="NCBI Taxonomy" id="404589"/>
    <lineage>
        <taxon>Bacteria</taxon>
        <taxon>Pseudomonadati</taxon>
        <taxon>Myxococcota</taxon>
        <taxon>Myxococcia</taxon>
        <taxon>Myxococcales</taxon>
        <taxon>Cystobacterineae</taxon>
        <taxon>Anaeromyxobacteraceae</taxon>
        <taxon>Anaeromyxobacter</taxon>
    </lineage>
</organism>
<proteinExistence type="inferred from homology"/>
<comment type="subunit">
    <text evidence="1">Part of the 50S ribosomal subunit.</text>
</comment>
<comment type="similarity">
    <text evidence="1">Belongs to the universal ribosomal protein uL30 family.</text>
</comment>
<sequence>MAAIQVKLVRGLAGCPAAHRTIVAGLGLKKRDSTKILPDTPQTMGMIAKVSYLVEWERVDQPAPEGRKARKAKAAARQG</sequence>
<reference key="1">
    <citation type="journal article" date="2015" name="Genome Announc.">
        <title>Complete genome sequence of Anaeromyxobacter sp. Fw109-5, an anaerobic, metal-reducing bacterium isolated from a contaminated subsurface environment.</title>
        <authorList>
            <person name="Hwang C."/>
            <person name="Copeland A."/>
            <person name="Lucas S."/>
            <person name="Lapidus A."/>
            <person name="Barry K."/>
            <person name="Glavina Del Rio T."/>
            <person name="Dalin E."/>
            <person name="Tice H."/>
            <person name="Pitluck S."/>
            <person name="Sims D."/>
            <person name="Brettin T."/>
            <person name="Bruce D.C."/>
            <person name="Detter J.C."/>
            <person name="Han C.S."/>
            <person name="Schmutz J."/>
            <person name="Larimer F.W."/>
            <person name="Land M.L."/>
            <person name="Hauser L.J."/>
            <person name="Kyrpides N."/>
            <person name="Lykidis A."/>
            <person name="Richardson P."/>
            <person name="Belieav A."/>
            <person name="Sanford R.A."/>
            <person name="Loeffler F.E."/>
            <person name="Fields M.W."/>
        </authorList>
    </citation>
    <scope>NUCLEOTIDE SEQUENCE [LARGE SCALE GENOMIC DNA]</scope>
    <source>
        <strain>Fw109-5</strain>
    </source>
</reference>
<accession>A7HBN6</accession>
<name>RL30_ANADF</name>
<keyword id="KW-1185">Reference proteome</keyword>
<keyword id="KW-0687">Ribonucleoprotein</keyword>
<keyword id="KW-0689">Ribosomal protein</keyword>
<protein>
    <recommendedName>
        <fullName evidence="1">Large ribosomal subunit protein uL30</fullName>
    </recommendedName>
    <alternativeName>
        <fullName evidence="2">50S ribosomal protein L30</fullName>
    </alternativeName>
</protein>
<dbReference type="EMBL" id="CP000769">
    <property type="protein sequence ID" value="ABS26132.1"/>
    <property type="molecule type" value="Genomic_DNA"/>
</dbReference>
<dbReference type="RefSeq" id="WP_012096711.1">
    <property type="nucleotide sequence ID" value="NC_009675.1"/>
</dbReference>
<dbReference type="SMR" id="A7HBN6"/>
<dbReference type="STRING" id="404589.Anae109_1929"/>
<dbReference type="KEGG" id="afw:Anae109_1929"/>
<dbReference type="eggNOG" id="COG1841">
    <property type="taxonomic scope" value="Bacteria"/>
</dbReference>
<dbReference type="HOGENOM" id="CLU_131047_2_1_7"/>
<dbReference type="OrthoDB" id="9812790at2"/>
<dbReference type="Proteomes" id="UP000006382">
    <property type="component" value="Chromosome"/>
</dbReference>
<dbReference type="GO" id="GO:0015934">
    <property type="term" value="C:large ribosomal subunit"/>
    <property type="evidence" value="ECO:0007669"/>
    <property type="project" value="InterPro"/>
</dbReference>
<dbReference type="GO" id="GO:0003735">
    <property type="term" value="F:structural constituent of ribosome"/>
    <property type="evidence" value="ECO:0007669"/>
    <property type="project" value="InterPro"/>
</dbReference>
<dbReference type="GO" id="GO:0006412">
    <property type="term" value="P:translation"/>
    <property type="evidence" value="ECO:0007669"/>
    <property type="project" value="InterPro"/>
</dbReference>
<dbReference type="CDD" id="cd01658">
    <property type="entry name" value="Ribosomal_L30"/>
    <property type="match status" value="1"/>
</dbReference>
<dbReference type="Gene3D" id="3.30.1390.20">
    <property type="entry name" value="Ribosomal protein L30, ferredoxin-like fold domain"/>
    <property type="match status" value="1"/>
</dbReference>
<dbReference type="HAMAP" id="MF_01371_B">
    <property type="entry name" value="Ribosomal_uL30_B"/>
    <property type="match status" value="1"/>
</dbReference>
<dbReference type="InterPro" id="IPR036919">
    <property type="entry name" value="Ribo_uL30_ferredoxin-like_sf"/>
</dbReference>
<dbReference type="InterPro" id="IPR005996">
    <property type="entry name" value="Ribosomal_uL30_bac-type"/>
</dbReference>
<dbReference type="InterPro" id="IPR016082">
    <property type="entry name" value="Ribosomal_uL30_ferredoxin-like"/>
</dbReference>
<dbReference type="NCBIfam" id="TIGR01308">
    <property type="entry name" value="rpmD_bact"/>
    <property type="match status" value="1"/>
</dbReference>
<dbReference type="Pfam" id="PF00327">
    <property type="entry name" value="Ribosomal_L30"/>
    <property type="match status" value="1"/>
</dbReference>
<dbReference type="SUPFAM" id="SSF55129">
    <property type="entry name" value="Ribosomal protein L30p/L7e"/>
    <property type="match status" value="1"/>
</dbReference>
<feature type="chain" id="PRO_0000347073" description="Large ribosomal subunit protein uL30">
    <location>
        <begin position="1"/>
        <end position="79"/>
    </location>
</feature>
<gene>
    <name evidence="1" type="primary">rpmD</name>
    <name type="ordered locus">Anae109_1929</name>
</gene>
<evidence type="ECO:0000255" key="1">
    <source>
        <dbReference type="HAMAP-Rule" id="MF_01371"/>
    </source>
</evidence>
<evidence type="ECO:0000305" key="2"/>